<accession>Q6D9A3</accession>
<organism>
    <name type="scientific">Pectobacterium atrosepticum (strain SCRI 1043 / ATCC BAA-672)</name>
    <name type="common">Erwinia carotovora subsp. atroseptica</name>
    <dbReference type="NCBI Taxonomy" id="218491"/>
    <lineage>
        <taxon>Bacteria</taxon>
        <taxon>Pseudomonadati</taxon>
        <taxon>Pseudomonadota</taxon>
        <taxon>Gammaproteobacteria</taxon>
        <taxon>Enterobacterales</taxon>
        <taxon>Pectobacteriaceae</taxon>
        <taxon>Pectobacterium</taxon>
    </lineage>
</organism>
<gene>
    <name evidence="1" type="primary">truB</name>
    <name type="ordered locus">ECA0714</name>
</gene>
<protein>
    <recommendedName>
        <fullName evidence="1">tRNA pseudouridine synthase B</fullName>
        <ecNumber evidence="1">5.4.99.25</ecNumber>
    </recommendedName>
    <alternativeName>
        <fullName evidence="1">tRNA pseudouridine(55) synthase</fullName>
        <shortName evidence="1">Psi55 synthase</shortName>
    </alternativeName>
    <alternativeName>
        <fullName evidence="1">tRNA pseudouridylate synthase</fullName>
    </alternativeName>
    <alternativeName>
        <fullName evidence="1">tRNA-uridine isomerase</fullName>
    </alternativeName>
</protein>
<dbReference type="EC" id="5.4.99.25" evidence="1"/>
<dbReference type="EMBL" id="BX950851">
    <property type="protein sequence ID" value="CAG73629.1"/>
    <property type="molecule type" value="Genomic_DNA"/>
</dbReference>
<dbReference type="RefSeq" id="WP_011092324.1">
    <property type="nucleotide sequence ID" value="NC_004547.2"/>
</dbReference>
<dbReference type="SMR" id="Q6D9A3"/>
<dbReference type="STRING" id="218491.ECA0714"/>
<dbReference type="KEGG" id="eca:ECA0714"/>
<dbReference type="PATRIC" id="fig|218491.5.peg.712"/>
<dbReference type="eggNOG" id="COG0130">
    <property type="taxonomic scope" value="Bacteria"/>
</dbReference>
<dbReference type="HOGENOM" id="CLU_032087_0_3_6"/>
<dbReference type="OrthoDB" id="9802309at2"/>
<dbReference type="Proteomes" id="UP000007966">
    <property type="component" value="Chromosome"/>
</dbReference>
<dbReference type="GO" id="GO:0003723">
    <property type="term" value="F:RNA binding"/>
    <property type="evidence" value="ECO:0007669"/>
    <property type="project" value="InterPro"/>
</dbReference>
<dbReference type="GO" id="GO:0160148">
    <property type="term" value="F:tRNA pseudouridine(55) synthase activity"/>
    <property type="evidence" value="ECO:0007669"/>
    <property type="project" value="UniProtKB-EC"/>
</dbReference>
<dbReference type="GO" id="GO:1990481">
    <property type="term" value="P:mRNA pseudouridine synthesis"/>
    <property type="evidence" value="ECO:0007669"/>
    <property type="project" value="TreeGrafter"/>
</dbReference>
<dbReference type="GO" id="GO:0031119">
    <property type="term" value="P:tRNA pseudouridine synthesis"/>
    <property type="evidence" value="ECO:0007669"/>
    <property type="project" value="UniProtKB-UniRule"/>
</dbReference>
<dbReference type="CDD" id="cd02573">
    <property type="entry name" value="PseudoU_synth_EcTruB"/>
    <property type="match status" value="1"/>
</dbReference>
<dbReference type="CDD" id="cd21152">
    <property type="entry name" value="PUA_TruB_bacterial"/>
    <property type="match status" value="1"/>
</dbReference>
<dbReference type="FunFam" id="2.30.130.10:FF:000004">
    <property type="entry name" value="tRNA pseudouridine synthase B"/>
    <property type="match status" value="1"/>
</dbReference>
<dbReference type="FunFam" id="3.30.2350.10:FF:000003">
    <property type="entry name" value="tRNA pseudouridine synthase B"/>
    <property type="match status" value="1"/>
</dbReference>
<dbReference type="Gene3D" id="3.30.2350.10">
    <property type="entry name" value="Pseudouridine synthase"/>
    <property type="match status" value="1"/>
</dbReference>
<dbReference type="Gene3D" id="2.30.130.10">
    <property type="entry name" value="PUA domain"/>
    <property type="match status" value="1"/>
</dbReference>
<dbReference type="HAMAP" id="MF_01080">
    <property type="entry name" value="TruB_bact"/>
    <property type="match status" value="1"/>
</dbReference>
<dbReference type="InterPro" id="IPR020103">
    <property type="entry name" value="PsdUridine_synth_cat_dom_sf"/>
</dbReference>
<dbReference type="InterPro" id="IPR002501">
    <property type="entry name" value="PsdUridine_synth_N"/>
</dbReference>
<dbReference type="InterPro" id="IPR015947">
    <property type="entry name" value="PUA-like_sf"/>
</dbReference>
<dbReference type="InterPro" id="IPR036974">
    <property type="entry name" value="PUA_sf"/>
</dbReference>
<dbReference type="InterPro" id="IPR014780">
    <property type="entry name" value="tRNA_psdUridine_synth_TruB"/>
</dbReference>
<dbReference type="InterPro" id="IPR015240">
    <property type="entry name" value="tRNA_sdUridine_synth_fam1_C"/>
</dbReference>
<dbReference type="InterPro" id="IPR032819">
    <property type="entry name" value="TruB_C"/>
</dbReference>
<dbReference type="NCBIfam" id="TIGR00431">
    <property type="entry name" value="TruB"/>
    <property type="match status" value="1"/>
</dbReference>
<dbReference type="PANTHER" id="PTHR13767:SF2">
    <property type="entry name" value="PSEUDOURIDYLATE SYNTHASE TRUB1"/>
    <property type="match status" value="1"/>
</dbReference>
<dbReference type="PANTHER" id="PTHR13767">
    <property type="entry name" value="TRNA-PSEUDOURIDINE SYNTHASE"/>
    <property type="match status" value="1"/>
</dbReference>
<dbReference type="Pfam" id="PF09157">
    <property type="entry name" value="TruB-C_2"/>
    <property type="match status" value="1"/>
</dbReference>
<dbReference type="Pfam" id="PF16198">
    <property type="entry name" value="TruB_C_2"/>
    <property type="match status" value="1"/>
</dbReference>
<dbReference type="Pfam" id="PF01509">
    <property type="entry name" value="TruB_N"/>
    <property type="match status" value="1"/>
</dbReference>
<dbReference type="SUPFAM" id="SSF55120">
    <property type="entry name" value="Pseudouridine synthase"/>
    <property type="match status" value="1"/>
</dbReference>
<dbReference type="SUPFAM" id="SSF88697">
    <property type="entry name" value="PUA domain-like"/>
    <property type="match status" value="1"/>
</dbReference>
<sequence length="314" mass="34909">MSRPRRRGRDVHGVLLLDKPQGVSSNDVLQKVKRIFNANRAGHTGALDPLATGMLPICLGEATKFSQYLLDSDKRYRVIARLGQRTDTSDADGNVIEERAIGFSATDLELALESFRGTTQQVPSMYSALKYQGRKLYEYARQGLTVPREAREITVYELQFIRWEGDELELEIHCSKGTYIRTIIDDLGEQLGCGAHVIYLRRLQVAIYPTERMVTLEQLAALAEQAQTQEHSLSLSLDSLLMPMESPVIDFPEVNLPPVVAGYLKLGQAVQAANAPLNGMVRITEGDAHKFIGMGEIDGDGRVAPRRLVVEFPV</sequence>
<name>TRUB_PECAS</name>
<proteinExistence type="inferred from homology"/>
<comment type="function">
    <text evidence="1">Responsible for synthesis of pseudouridine from uracil-55 in the psi GC loop of transfer RNAs.</text>
</comment>
<comment type="catalytic activity">
    <reaction evidence="1">
        <text>uridine(55) in tRNA = pseudouridine(55) in tRNA</text>
        <dbReference type="Rhea" id="RHEA:42532"/>
        <dbReference type="Rhea" id="RHEA-COMP:10101"/>
        <dbReference type="Rhea" id="RHEA-COMP:10102"/>
        <dbReference type="ChEBI" id="CHEBI:65314"/>
        <dbReference type="ChEBI" id="CHEBI:65315"/>
        <dbReference type="EC" id="5.4.99.25"/>
    </reaction>
</comment>
<comment type="similarity">
    <text evidence="1">Belongs to the pseudouridine synthase TruB family. Type 1 subfamily.</text>
</comment>
<feature type="chain" id="PRO_0000121835" description="tRNA pseudouridine synthase B">
    <location>
        <begin position="1"/>
        <end position="314"/>
    </location>
</feature>
<feature type="active site" description="Nucleophile" evidence="1">
    <location>
        <position position="48"/>
    </location>
</feature>
<feature type="binding site" evidence="1">
    <location>
        <position position="43"/>
    </location>
    <ligand>
        <name>substrate</name>
    </ligand>
</feature>
<feature type="binding site" evidence="1">
    <location>
        <position position="76"/>
    </location>
    <ligand>
        <name>substrate</name>
    </ligand>
</feature>
<feature type="binding site" evidence="1">
    <location>
        <position position="179"/>
    </location>
    <ligand>
        <name>substrate</name>
    </ligand>
</feature>
<feature type="binding site" evidence="1">
    <location>
        <position position="200"/>
    </location>
    <ligand>
        <name>substrate</name>
    </ligand>
</feature>
<keyword id="KW-0413">Isomerase</keyword>
<keyword id="KW-1185">Reference proteome</keyword>
<keyword id="KW-0819">tRNA processing</keyword>
<evidence type="ECO:0000255" key="1">
    <source>
        <dbReference type="HAMAP-Rule" id="MF_01080"/>
    </source>
</evidence>
<reference key="1">
    <citation type="journal article" date="2004" name="Proc. Natl. Acad. Sci. U.S.A.">
        <title>Genome sequence of the enterobacterial phytopathogen Erwinia carotovora subsp. atroseptica and characterization of virulence factors.</title>
        <authorList>
            <person name="Bell K.S."/>
            <person name="Sebaihia M."/>
            <person name="Pritchard L."/>
            <person name="Holden M.T.G."/>
            <person name="Hyman L.J."/>
            <person name="Holeva M.C."/>
            <person name="Thomson N.R."/>
            <person name="Bentley S.D."/>
            <person name="Churcher L.J.C."/>
            <person name="Mungall K."/>
            <person name="Atkin R."/>
            <person name="Bason N."/>
            <person name="Brooks K."/>
            <person name="Chillingworth T."/>
            <person name="Clark K."/>
            <person name="Doggett J."/>
            <person name="Fraser A."/>
            <person name="Hance Z."/>
            <person name="Hauser H."/>
            <person name="Jagels K."/>
            <person name="Moule S."/>
            <person name="Norbertczak H."/>
            <person name="Ormond D."/>
            <person name="Price C."/>
            <person name="Quail M.A."/>
            <person name="Sanders M."/>
            <person name="Walker D."/>
            <person name="Whitehead S."/>
            <person name="Salmond G.P.C."/>
            <person name="Birch P.R.J."/>
            <person name="Parkhill J."/>
            <person name="Toth I.K."/>
        </authorList>
    </citation>
    <scope>NUCLEOTIDE SEQUENCE [LARGE SCALE GENOMIC DNA]</scope>
    <source>
        <strain>SCRI 1043 / ATCC BAA-672</strain>
    </source>
</reference>